<organism>
    <name type="scientific">Aeromonas hydrophila subsp. hydrophila (strain ATCC 7966 / DSM 30187 / BCRC 13018 / CCUG 14551 / JCM 1027 / KCTC 2358 / NCIMB 9240 / NCTC 8049)</name>
    <dbReference type="NCBI Taxonomy" id="380703"/>
    <lineage>
        <taxon>Bacteria</taxon>
        <taxon>Pseudomonadati</taxon>
        <taxon>Pseudomonadota</taxon>
        <taxon>Gammaproteobacteria</taxon>
        <taxon>Aeromonadales</taxon>
        <taxon>Aeromonadaceae</taxon>
        <taxon>Aeromonas</taxon>
    </lineage>
</organism>
<name>CYSN_AERHH</name>
<sequence length="475" mass="52753">MNNHIQTAISEQGIEAYLHAQQHKSLLRFLTCGSVDDGKSTLIGRLLHDSQQIYEDQLKALESDSQKLGTTGEKLDLALLVDGLQAEREQGITIDVAYRYFSTAKRKFIISDTPGHEQYTRNMATGASTCDLAIILIDARKGVLDQTRRHSFIASLLGIKQFVVAVNKMDLVEFSQEVFERISAEYREFAKKLSVDTIHIVPVSALDGDNVVNPSDKLAWYQGETLLSLLESAEVERELERHPVRLPVQYVNRPNLDFRGFAGTLASGILRVGDKLAVLPSGKESTVTRIVTFDGDLDYALPGQAITVTFADEIDISRGDLLVDAARKPLVTQNLLAHIVWMGEESLQPGRVYDVKLATKKSRGQVEAIRHRIEINKLDELDASELKLNEIGLCELSLTDPVAFDPYQEIRDTGSFILIDRLTNVTVGAGMIVEGLAAKVATGHYSEFEVELNALVRKHFPHWQALTISNDASKE</sequence>
<protein>
    <recommendedName>
        <fullName evidence="2">Sulfate adenylyltransferase subunit 1</fullName>
        <ecNumber evidence="2">2.7.7.4</ecNumber>
    </recommendedName>
    <alternativeName>
        <fullName evidence="2">ATP-sulfurylase large subunit</fullName>
    </alternativeName>
    <alternativeName>
        <fullName evidence="2">Sulfate adenylate transferase</fullName>
        <shortName evidence="2">SAT</shortName>
    </alternativeName>
</protein>
<comment type="function">
    <text evidence="2">With CysD forms the ATP sulfurylase (ATPS) that catalyzes the adenylation of sulfate producing adenosine 5'-phosphosulfate (APS) and diphosphate, the first enzymatic step in sulfur assimilation pathway. APS synthesis involves the formation of a high-energy phosphoric-sulfuric acid anhydride bond driven by GTP hydrolysis by CysN coupled to ATP hydrolysis by CysD.</text>
</comment>
<comment type="catalytic activity">
    <reaction evidence="2">
        <text>sulfate + ATP + H(+) = adenosine 5'-phosphosulfate + diphosphate</text>
        <dbReference type="Rhea" id="RHEA:18133"/>
        <dbReference type="ChEBI" id="CHEBI:15378"/>
        <dbReference type="ChEBI" id="CHEBI:16189"/>
        <dbReference type="ChEBI" id="CHEBI:30616"/>
        <dbReference type="ChEBI" id="CHEBI:33019"/>
        <dbReference type="ChEBI" id="CHEBI:58243"/>
        <dbReference type="EC" id="2.7.7.4"/>
    </reaction>
</comment>
<comment type="pathway">
    <text evidence="2">Sulfur metabolism; hydrogen sulfide biosynthesis; sulfite from sulfate: step 1/3.</text>
</comment>
<comment type="subunit">
    <text evidence="2">Heterodimer composed of CysD, the smaller subunit, and CysN.</text>
</comment>
<comment type="similarity">
    <text evidence="2">Belongs to the TRAFAC class translation factor GTPase superfamily. Classic translation factor GTPase family. CysN/NodQ subfamily.</text>
</comment>
<dbReference type="EC" id="2.7.7.4" evidence="2"/>
<dbReference type="EMBL" id="CP000462">
    <property type="protein sequence ID" value="ABK37706.1"/>
    <property type="molecule type" value="Genomic_DNA"/>
</dbReference>
<dbReference type="RefSeq" id="WP_011707308.1">
    <property type="nucleotide sequence ID" value="NC_008570.1"/>
</dbReference>
<dbReference type="RefSeq" id="YP_858036.1">
    <property type="nucleotide sequence ID" value="NC_008570.1"/>
</dbReference>
<dbReference type="SMR" id="A0KP35"/>
<dbReference type="STRING" id="380703.AHA_3566"/>
<dbReference type="EnsemblBacteria" id="ABK37706">
    <property type="protein sequence ID" value="ABK37706"/>
    <property type="gene ID" value="AHA_3566"/>
</dbReference>
<dbReference type="GeneID" id="4488261"/>
<dbReference type="KEGG" id="aha:AHA_3566"/>
<dbReference type="PATRIC" id="fig|380703.7.peg.3553"/>
<dbReference type="eggNOG" id="COG2895">
    <property type="taxonomic scope" value="Bacteria"/>
</dbReference>
<dbReference type="HOGENOM" id="CLU_007265_5_2_6"/>
<dbReference type="OrthoDB" id="9804504at2"/>
<dbReference type="UniPathway" id="UPA00140">
    <property type="reaction ID" value="UER00204"/>
</dbReference>
<dbReference type="Proteomes" id="UP000000756">
    <property type="component" value="Chromosome"/>
</dbReference>
<dbReference type="GO" id="GO:0005524">
    <property type="term" value="F:ATP binding"/>
    <property type="evidence" value="ECO:0007669"/>
    <property type="project" value="UniProtKB-KW"/>
</dbReference>
<dbReference type="GO" id="GO:0005525">
    <property type="term" value="F:GTP binding"/>
    <property type="evidence" value="ECO:0007669"/>
    <property type="project" value="UniProtKB-UniRule"/>
</dbReference>
<dbReference type="GO" id="GO:0003924">
    <property type="term" value="F:GTPase activity"/>
    <property type="evidence" value="ECO:0007669"/>
    <property type="project" value="InterPro"/>
</dbReference>
<dbReference type="GO" id="GO:0004781">
    <property type="term" value="F:sulfate adenylyltransferase (ATP) activity"/>
    <property type="evidence" value="ECO:0007669"/>
    <property type="project" value="UniProtKB-UniRule"/>
</dbReference>
<dbReference type="GO" id="GO:0070814">
    <property type="term" value="P:hydrogen sulfide biosynthetic process"/>
    <property type="evidence" value="ECO:0007669"/>
    <property type="project" value="UniProtKB-UniRule"/>
</dbReference>
<dbReference type="GO" id="GO:0000103">
    <property type="term" value="P:sulfate assimilation"/>
    <property type="evidence" value="ECO:0007669"/>
    <property type="project" value="UniProtKB-UniRule"/>
</dbReference>
<dbReference type="CDD" id="cd04166">
    <property type="entry name" value="CysN_ATPS"/>
    <property type="match status" value="1"/>
</dbReference>
<dbReference type="CDD" id="cd03695">
    <property type="entry name" value="CysN_NodQ_II"/>
    <property type="match status" value="1"/>
</dbReference>
<dbReference type="CDD" id="cd04095">
    <property type="entry name" value="CysN_NoDQ_III"/>
    <property type="match status" value="1"/>
</dbReference>
<dbReference type="FunFam" id="2.40.30.10:FF:000027">
    <property type="entry name" value="Sulfate adenylyltransferase subunit 1"/>
    <property type="match status" value="1"/>
</dbReference>
<dbReference type="FunFam" id="2.40.30.10:FF:000031">
    <property type="entry name" value="Sulfate adenylyltransferase subunit 1"/>
    <property type="match status" value="1"/>
</dbReference>
<dbReference type="FunFam" id="3.40.50.300:FF:000119">
    <property type="entry name" value="Sulfate adenylyltransferase subunit 1"/>
    <property type="match status" value="1"/>
</dbReference>
<dbReference type="Gene3D" id="3.40.50.300">
    <property type="entry name" value="P-loop containing nucleotide triphosphate hydrolases"/>
    <property type="match status" value="1"/>
</dbReference>
<dbReference type="Gene3D" id="2.40.30.10">
    <property type="entry name" value="Translation factors"/>
    <property type="match status" value="2"/>
</dbReference>
<dbReference type="HAMAP" id="MF_00062">
    <property type="entry name" value="Sulf_adenylyltr_sub1"/>
    <property type="match status" value="1"/>
</dbReference>
<dbReference type="InterPro" id="IPR041757">
    <property type="entry name" value="CysN_GTP-bd"/>
</dbReference>
<dbReference type="InterPro" id="IPR044138">
    <property type="entry name" value="CysN_II"/>
</dbReference>
<dbReference type="InterPro" id="IPR044139">
    <property type="entry name" value="CysN_NoDQ_III"/>
</dbReference>
<dbReference type="InterPro" id="IPR031157">
    <property type="entry name" value="G_TR_CS"/>
</dbReference>
<dbReference type="InterPro" id="IPR054696">
    <property type="entry name" value="GTP-eEF1A_C"/>
</dbReference>
<dbReference type="InterPro" id="IPR027417">
    <property type="entry name" value="P-loop_NTPase"/>
</dbReference>
<dbReference type="InterPro" id="IPR005225">
    <property type="entry name" value="Small_GTP-bd"/>
</dbReference>
<dbReference type="InterPro" id="IPR011779">
    <property type="entry name" value="SO4_adenylTrfase_lsu"/>
</dbReference>
<dbReference type="InterPro" id="IPR000795">
    <property type="entry name" value="T_Tr_GTP-bd_dom"/>
</dbReference>
<dbReference type="InterPro" id="IPR050100">
    <property type="entry name" value="TRAFAC_GTPase_members"/>
</dbReference>
<dbReference type="InterPro" id="IPR009000">
    <property type="entry name" value="Transl_B-barrel_sf"/>
</dbReference>
<dbReference type="InterPro" id="IPR009001">
    <property type="entry name" value="Transl_elong_EF1A/Init_IF2_C"/>
</dbReference>
<dbReference type="NCBIfam" id="TIGR02034">
    <property type="entry name" value="CysN"/>
    <property type="match status" value="1"/>
</dbReference>
<dbReference type="NCBIfam" id="NF003478">
    <property type="entry name" value="PRK05124.1"/>
    <property type="match status" value="1"/>
</dbReference>
<dbReference type="NCBIfam" id="NF004035">
    <property type="entry name" value="PRK05506.1"/>
    <property type="match status" value="1"/>
</dbReference>
<dbReference type="NCBIfam" id="TIGR00231">
    <property type="entry name" value="small_GTP"/>
    <property type="match status" value="1"/>
</dbReference>
<dbReference type="PANTHER" id="PTHR23115">
    <property type="entry name" value="TRANSLATION FACTOR"/>
    <property type="match status" value="1"/>
</dbReference>
<dbReference type="Pfam" id="PF22594">
    <property type="entry name" value="GTP-eEF1A_C"/>
    <property type="match status" value="1"/>
</dbReference>
<dbReference type="Pfam" id="PF00009">
    <property type="entry name" value="GTP_EFTU"/>
    <property type="match status" value="1"/>
</dbReference>
<dbReference type="PRINTS" id="PR00315">
    <property type="entry name" value="ELONGATNFCT"/>
</dbReference>
<dbReference type="SUPFAM" id="SSF50465">
    <property type="entry name" value="EF-Tu/eEF-1alpha/eIF2-gamma C-terminal domain"/>
    <property type="match status" value="1"/>
</dbReference>
<dbReference type="SUPFAM" id="SSF52540">
    <property type="entry name" value="P-loop containing nucleoside triphosphate hydrolases"/>
    <property type="match status" value="1"/>
</dbReference>
<dbReference type="SUPFAM" id="SSF50447">
    <property type="entry name" value="Translation proteins"/>
    <property type="match status" value="1"/>
</dbReference>
<dbReference type="PROSITE" id="PS00301">
    <property type="entry name" value="G_TR_1"/>
    <property type="match status" value="1"/>
</dbReference>
<dbReference type="PROSITE" id="PS51722">
    <property type="entry name" value="G_TR_2"/>
    <property type="match status" value="1"/>
</dbReference>
<feature type="chain" id="PRO_1000008899" description="Sulfate adenylyltransferase subunit 1">
    <location>
        <begin position="1"/>
        <end position="475"/>
    </location>
</feature>
<feature type="domain" description="tr-type G">
    <location>
        <begin position="24"/>
        <end position="240"/>
    </location>
</feature>
<feature type="region of interest" description="G1" evidence="1">
    <location>
        <begin position="33"/>
        <end position="40"/>
    </location>
</feature>
<feature type="region of interest" description="G2" evidence="1">
    <location>
        <begin position="91"/>
        <end position="95"/>
    </location>
</feature>
<feature type="region of interest" description="G3" evidence="1">
    <location>
        <begin position="112"/>
        <end position="115"/>
    </location>
</feature>
<feature type="region of interest" description="G4" evidence="1">
    <location>
        <begin position="167"/>
        <end position="170"/>
    </location>
</feature>
<feature type="region of interest" description="G5" evidence="1">
    <location>
        <begin position="204"/>
        <end position="206"/>
    </location>
</feature>
<feature type="binding site" evidence="2">
    <location>
        <begin position="33"/>
        <end position="40"/>
    </location>
    <ligand>
        <name>GTP</name>
        <dbReference type="ChEBI" id="CHEBI:37565"/>
    </ligand>
</feature>
<feature type="binding site" evidence="2">
    <location>
        <begin position="112"/>
        <end position="116"/>
    </location>
    <ligand>
        <name>GTP</name>
        <dbReference type="ChEBI" id="CHEBI:37565"/>
    </ligand>
</feature>
<feature type="binding site" evidence="2">
    <location>
        <begin position="167"/>
        <end position="170"/>
    </location>
    <ligand>
        <name>GTP</name>
        <dbReference type="ChEBI" id="CHEBI:37565"/>
    </ligand>
</feature>
<evidence type="ECO:0000250" key="1"/>
<evidence type="ECO:0000255" key="2">
    <source>
        <dbReference type="HAMAP-Rule" id="MF_00062"/>
    </source>
</evidence>
<keyword id="KW-0067">ATP-binding</keyword>
<keyword id="KW-0342">GTP-binding</keyword>
<keyword id="KW-0547">Nucleotide-binding</keyword>
<keyword id="KW-0548">Nucleotidyltransferase</keyword>
<keyword id="KW-1185">Reference proteome</keyword>
<keyword id="KW-0808">Transferase</keyword>
<gene>
    <name evidence="2" type="primary">cysN</name>
    <name type="ordered locus">AHA_3566</name>
</gene>
<accession>A0KP35</accession>
<reference key="1">
    <citation type="journal article" date="2006" name="J. Bacteriol.">
        <title>Genome sequence of Aeromonas hydrophila ATCC 7966T: jack of all trades.</title>
        <authorList>
            <person name="Seshadri R."/>
            <person name="Joseph S.W."/>
            <person name="Chopra A.K."/>
            <person name="Sha J."/>
            <person name="Shaw J."/>
            <person name="Graf J."/>
            <person name="Haft D.H."/>
            <person name="Wu M."/>
            <person name="Ren Q."/>
            <person name="Rosovitz M.J."/>
            <person name="Madupu R."/>
            <person name="Tallon L."/>
            <person name="Kim M."/>
            <person name="Jin S."/>
            <person name="Vuong H."/>
            <person name="Stine O.C."/>
            <person name="Ali A."/>
            <person name="Horneman A.J."/>
            <person name="Heidelberg J.F."/>
        </authorList>
    </citation>
    <scope>NUCLEOTIDE SEQUENCE [LARGE SCALE GENOMIC DNA]</scope>
    <source>
        <strain>ATCC 7966 / DSM 30187 / BCRC 13018 / CCUG 14551 / JCM 1027 / KCTC 2358 / NCIMB 9240 / NCTC 8049</strain>
    </source>
</reference>
<proteinExistence type="inferred from homology"/>